<name>MTR2_CANAX</name>
<accession>P84148</accession>
<feature type="chain" id="PRO_0000096633" description="mRNA transport regulator MTR2">
    <location>
        <begin position="1"/>
        <end position="181"/>
    </location>
</feature>
<feature type="helix" evidence="3">
    <location>
        <begin position="5"/>
        <end position="7"/>
    </location>
</feature>
<feature type="helix" evidence="3">
    <location>
        <begin position="9"/>
        <end position="20"/>
    </location>
</feature>
<feature type="helix" evidence="3">
    <location>
        <begin position="35"/>
        <end position="39"/>
    </location>
</feature>
<feature type="turn" evidence="3">
    <location>
        <begin position="40"/>
        <end position="45"/>
    </location>
</feature>
<feature type="strand" evidence="3">
    <location>
        <begin position="46"/>
        <end position="54"/>
    </location>
</feature>
<feature type="strand" evidence="2">
    <location>
        <begin position="63"/>
        <end position="65"/>
    </location>
</feature>
<feature type="helix" evidence="3">
    <location>
        <begin position="67"/>
        <end position="76"/>
    </location>
</feature>
<feature type="strand" evidence="3">
    <location>
        <begin position="81"/>
        <end position="93"/>
    </location>
</feature>
<feature type="turn" evidence="3">
    <location>
        <begin position="94"/>
        <end position="97"/>
    </location>
</feature>
<feature type="strand" evidence="3">
    <location>
        <begin position="98"/>
        <end position="110"/>
    </location>
</feature>
<feature type="strand" evidence="2">
    <location>
        <begin position="112"/>
        <end position="114"/>
    </location>
</feature>
<feature type="strand" evidence="2">
    <location>
        <begin position="123"/>
        <end position="125"/>
    </location>
</feature>
<feature type="strand" evidence="3">
    <location>
        <begin position="144"/>
        <end position="154"/>
    </location>
</feature>
<feature type="strand" evidence="3">
    <location>
        <begin position="163"/>
        <end position="172"/>
    </location>
</feature>
<sequence length="181" mass="20494">MNQDPTQQLEPFLKRFLASLDLLYTQPTSQPFPNVESYATQLGSNLKRSSAIIVNGQPIIPSPQEDCKLQFQKKWLQTPLSSHQLTSYDGHLIPGTGTFVVHFSAKVRFDQSGRNRLGESADLFQENNSIVSKTNQRPIWGSWFGVDVNLVVDENVMQDGEIINSMDYRFTYVPNDSIIKV</sequence>
<comment type="function">
    <text>Affects mRNA transport from the nucleus to the cytoplasm.</text>
</comment>
<comment type="subunit">
    <text evidence="1">Interacts with MEX67.</text>
</comment>
<comment type="subcellular location">
    <subcellularLocation>
        <location>Nucleus</location>
    </subcellularLocation>
</comment>
<dbReference type="PDB" id="1Q40">
    <property type="method" value="X-ray"/>
    <property type="resolution" value="1.95 A"/>
    <property type="chains" value="A/C=1-181"/>
</dbReference>
<dbReference type="PDB" id="1Q42">
    <property type="method" value="X-ray"/>
    <property type="resolution" value="1.75 A"/>
    <property type="chains" value="A=1-181"/>
</dbReference>
<dbReference type="PDBsum" id="1Q40"/>
<dbReference type="PDBsum" id="1Q42"/>
<dbReference type="SMR" id="P84148"/>
<dbReference type="VEuPathDB" id="FungiDB:C2_10640C_A"/>
<dbReference type="VEuPathDB" id="FungiDB:CAWG_06126"/>
<dbReference type="EvolutionaryTrace" id="P84148"/>
<dbReference type="GO" id="GO:0005634">
    <property type="term" value="C:nucleus"/>
    <property type="evidence" value="ECO:0007669"/>
    <property type="project" value="UniProtKB-SubCell"/>
</dbReference>
<dbReference type="Gene3D" id="3.10.450.50">
    <property type="match status" value="1"/>
</dbReference>
<dbReference type="InterPro" id="IPR032710">
    <property type="entry name" value="NTF2-like_dom_sf"/>
</dbReference>
<dbReference type="InterPro" id="IPR019488">
    <property type="entry name" value="Nucl_pore_RNA_shuttling_Mtr2"/>
</dbReference>
<dbReference type="Pfam" id="PF10429">
    <property type="entry name" value="Mtr2"/>
    <property type="match status" value="1"/>
</dbReference>
<dbReference type="SUPFAM" id="SSF54427">
    <property type="entry name" value="NTF2-like"/>
    <property type="match status" value="1"/>
</dbReference>
<evidence type="ECO:0000269" key="1">
    <source>
    </source>
</evidence>
<evidence type="ECO:0007829" key="2">
    <source>
        <dbReference type="PDB" id="1Q40"/>
    </source>
</evidence>
<evidence type="ECO:0007829" key="3">
    <source>
        <dbReference type="PDB" id="1Q42"/>
    </source>
</evidence>
<reference key="1">
    <citation type="journal article" date="2003" name="J. Biol. Chem.">
        <title>The Mtr2-Mex67 NTF2-like domain complex. Structural insights into a dual role of Mtr2 for yeast nuclear export.</title>
        <authorList>
            <person name="Senay C."/>
            <person name="Ferrari P."/>
            <person name="Rocher C."/>
            <person name="Rieger K.J."/>
            <person name="Winter J."/>
            <person name="Platel D."/>
            <person name="Bourne Y."/>
        </authorList>
    </citation>
    <scope>X-RAY CRYSTALLOGRAPHY (1.75 ANGSTROMS) IN COMPLEX WITH MEX67</scope>
</reference>
<gene>
    <name type="primary">MTR2</name>
</gene>
<keyword id="KW-0002">3D-structure</keyword>
<keyword id="KW-0539">Nucleus</keyword>
<keyword id="KW-0813">Transport</keyword>
<proteinExistence type="evidence at protein level"/>
<protein>
    <recommendedName>
        <fullName>mRNA transport regulator MTR2</fullName>
    </recommendedName>
</protein>
<organism>
    <name type="scientific">Candida albicans</name>
    <name type="common">Yeast</name>
    <dbReference type="NCBI Taxonomy" id="5476"/>
    <lineage>
        <taxon>Eukaryota</taxon>
        <taxon>Fungi</taxon>
        <taxon>Dikarya</taxon>
        <taxon>Ascomycota</taxon>
        <taxon>Saccharomycotina</taxon>
        <taxon>Pichiomycetes</taxon>
        <taxon>Debaryomycetaceae</taxon>
        <taxon>Candida/Lodderomyces clade</taxon>
        <taxon>Candida</taxon>
    </lineage>
</organism>